<proteinExistence type="inferred from homology"/>
<sequence>MISVNDFRTGLTIEVDGDIWRVIEFQHVKPGKGAAFVRSKLRNLRTGAIQEKTFRAGEKVSKAQIDNRKMQYLYANGDQHVFMDMESYEQIELPAKQIEHELKFLKENMEVFIMMYQGETIGVELPNTVELKVVETEPGIKGDTASGGSKPATLETGLVVQVPFFVNEGDVLIINTTDGTYVSRA</sequence>
<accession>B7GHE5</accession>
<reference key="1">
    <citation type="journal article" date="2008" name="Genome Biol.">
        <title>Encapsulated in silica: genome, proteome and physiology of the thermophilic bacterium Anoxybacillus flavithermus WK1.</title>
        <authorList>
            <person name="Saw J.H."/>
            <person name="Mountain B.W."/>
            <person name="Feng L."/>
            <person name="Omelchenko M.V."/>
            <person name="Hou S."/>
            <person name="Saito J.A."/>
            <person name="Stott M.B."/>
            <person name="Li D."/>
            <person name="Zhao G."/>
            <person name="Wu J."/>
            <person name="Galperin M.Y."/>
            <person name="Koonin E.V."/>
            <person name="Makarova K.S."/>
            <person name="Wolf Y.I."/>
            <person name="Rigden D.J."/>
            <person name="Dunfield P.F."/>
            <person name="Wang L."/>
            <person name="Alam M."/>
        </authorList>
    </citation>
    <scope>NUCLEOTIDE SEQUENCE [LARGE SCALE GENOMIC DNA]</scope>
    <source>
        <strain>DSM 21510 / WK1</strain>
    </source>
</reference>
<keyword id="KW-0963">Cytoplasm</keyword>
<keyword id="KW-0251">Elongation factor</keyword>
<keyword id="KW-0648">Protein biosynthesis</keyword>
<protein>
    <recommendedName>
        <fullName evidence="1">Elongation factor P</fullName>
        <shortName evidence="1">EF-P</shortName>
    </recommendedName>
</protein>
<evidence type="ECO:0000255" key="1">
    <source>
        <dbReference type="HAMAP-Rule" id="MF_00141"/>
    </source>
</evidence>
<feature type="chain" id="PRO_1000117883" description="Elongation factor P">
    <location>
        <begin position="1"/>
        <end position="185"/>
    </location>
</feature>
<organism>
    <name type="scientific">Anoxybacillus flavithermus (strain DSM 21510 / WK1)</name>
    <dbReference type="NCBI Taxonomy" id="491915"/>
    <lineage>
        <taxon>Bacteria</taxon>
        <taxon>Bacillati</taxon>
        <taxon>Bacillota</taxon>
        <taxon>Bacilli</taxon>
        <taxon>Bacillales</taxon>
        <taxon>Anoxybacillaceae</taxon>
        <taxon>Anoxybacillus</taxon>
    </lineage>
</organism>
<dbReference type="EMBL" id="CP000922">
    <property type="protein sequence ID" value="ACJ33306.1"/>
    <property type="molecule type" value="Genomic_DNA"/>
</dbReference>
<dbReference type="RefSeq" id="WP_003394108.1">
    <property type="nucleotide sequence ID" value="NC_011567.1"/>
</dbReference>
<dbReference type="SMR" id="B7GHE5"/>
<dbReference type="STRING" id="491915.Aflv_0930"/>
<dbReference type="GeneID" id="7037187"/>
<dbReference type="KEGG" id="afl:Aflv_0930"/>
<dbReference type="eggNOG" id="COG0231">
    <property type="taxonomic scope" value="Bacteria"/>
</dbReference>
<dbReference type="HOGENOM" id="CLU_074944_0_1_9"/>
<dbReference type="UniPathway" id="UPA00345"/>
<dbReference type="Proteomes" id="UP000000742">
    <property type="component" value="Chromosome"/>
</dbReference>
<dbReference type="GO" id="GO:0005737">
    <property type="term" value="C:cytoplasm"/>
    <property type="evidence" value="ECO:0007669"/>
    <property type="project" value="UniProtKB-SubCell"/>
</dbReference>
<dbReference type="GO" id="GO:0003746">
    <property type="term" value="F:translation elongation factor activity"/>
    <property type="evidence" value="ECO:0007669"/>
    <property type="project" value="UniProtKB-UniRule"/>
</dbReference>
<dbReference type="GO" id="GO:0043043">
    <property type="term" value="P:peptide biosynthetic process"/>
    <property type="evidence" value="ECO:0007669"/>
    <property type="project" value="InterPro"/>
</dbReference>
<dbReference type="CDD" id="cd04470">
    <property type="entry name" value="S1_EF-P_repeat_1"/>
    <property type="match status" value="1"/>
</dbReference>
<dbReference type="CDD" id="cd05794">
    <property type="entry name" value="S1_EF-P_repeat_2"/>
    <property type="match status" value="1"/>
</dbReference>
<dbReference type="FunFam" id="2.30.30.30:FF:000010">
    <property type="entry name" value="Elongation factor P"/>
    <property type="match status" value="1"/>
</dbReference>
<dbReference type="FunFam" id="2.40.50.140:FF:000004">
    <property type="entry name" value="Elongation factor P"/>
    <property type="match status" value="1"/>
</dbReference>
<dbReference type="FunFam" id="2.40.50.140:FF:000009">
    <property type="entry name" value="Elongation factor P"/>
    <property type="match status" value="1"/>
</dbReference>
<dbReference type="Gene3D" id="2.30.30.30">
    <property type="match status" value="1"/>
</dbReference>
<dbReference type="Gene3D" id="2.40.50.140">
    <property type="entry name" value="Nucleic acid-binding proteins"/>
    <property type="match status" value="2"/>
</dbReference>
<dbReference type="HAMAP" id="MF_00141">
    <property type="entry name" value="EF_P"/>
    <property type="match status" value="1"/>
</dbReference>
<dbReference type="InterPro" id="IPR015365">
    <property type="entry name" value="Elong-fact-P_C"/>
</dbReference>
<dbReference type="InterPro" id="IPR012340">
    <property type="entry name" value="NA-bd_OB-fold"/>
</dbReference>
<dbReference type="InterPro" id="IPR014722">
    <property type="entry name" value="Rib_uL2_dom2"/>
</dbReference>
<dbReference type="InterPro" id="IPR020599">
    <property type="entry name" value="Transl_elong_fac_P/YeiP"/>
</dbReference>
<dbReference type="InterPro" id="IPR013185">
    <property type="entry name" value="Transl_elong_KOW-like"/>
</dbReference>
<dbReference type="InterPro" id="IPR001059">
    <property type="entry name" value="Transl_elong_P/YeiP_cen"/>
</dbReference>
<dbReference type="InterPro" id="IPR013852">
    <property type="entry name" value="Transl_elong_P/YeiP_CS"/>
</dbReference>
<dbReference type="InterPro" id="IPR011768">
    <property type="entry name" value="Transl_elongation_fac_P"/>
</dbReference>
<dbReference type="InterPro" id="IPR008991">
    <property type="entry name" value="Translation_prot_SH3-like_sf"/>
</dbReference>
<dbReference type="NCBIfam" id="TIGR00038">
    <property type="entry name" value="efp"/>
    <property type="match status" value="1"/>
</dbReference>
<dbReference type="NCBIfam" id="NF001810">
    <property type="entry name" value="PRK00529.1"/>
    <property type="match status" value="1"/>
</dbReference>
<dbReference type="PANTHER" id="PTHR30053">
    <property type="entry name" value="ELONGATION FACTOR P"/>
    <property type="match status" value="1"/>
</dbReference>
<dbReference type="PANTHER" id="PTHR30053:SF12">
    <property type="entry name" value="ELONGATION FACTOR P (EF-P) FAMILY PROTEIN"/>
    <property type="match status" value="1"/>
</dbReference>
<dbReference type="Pfam" id="PF01132">
    <property type="entry name" value="EFP"/>
    <property type="match status" value="1"/>
</dbReference>
<dbReference type="Pfam" id="PF08207">
    <property type="entry name" value="EFP_N"/>
    <property type="match status" value="1"/>
</dbReference>
<dbReference type="Pfam" id="PF09285">
    <property type="entry name" value="Elong-fact-P_C"/>
    <property type="match status" value="1"/>
</dbReference>
<dbReference type="PIRSF" id="PIRSF005901">
    <property type="entry name" value="EF-P"/>
    <property type="match status" value="1"/>
</dbReference>
<dbReference type="SMART" id="SM01185">
    <property type="entry name" value="EFP"/>
    <property type="match status" value="1"/>
</dbReference>
<dbReference type="SMART" id="SM00841">
    <property type="entry name" value="Elong-fact-P_C"/>
    <property type="match status" value="1"/>
</dbReference>
<dbReference type="SUPFAM" id="SSF50249">
    <property type="entry name" value="Nucleic acid-binding proteins"/>
    <property type="match status" value="2"/>
</dbReference>
<dbReference type="SUPFAM" id="SSF50104">
    <property type="entry name" value="Translation proteins SH3-like domain"/>
    <property type="match status" value="1"/>
</dbReference>
<dbReference type="PROSITE" id="PS01275">
    <property type="entry name" value="EFP"/>
    <property type="match status" value="1"/>
</dbReference>
<gene>
    <name evidence="1" type="primary">efp</name>
    <name type="ordered locus">Aflv_0930</name>
</gene>
<name>EFP_ANOFW</name>
<comment type="function">
    <text evidence="1">Involved in peptide bond synthesis. Stimulates efficient translation and peptide-bond synthesis on native or reconstituted 70S ribosomes in vitro. Probably functions indirectly by altering the affinity of the ribosome for aminoacyl-tRNA, thus increasing their reactivity as acceptors for peptidyl transferase.</text>
</comment>
<comment type="pathway">
    <text evidence="1">Protein biosynthesis; polypeptide chain elongation.</text>
</comment>
<comment type="subcellular location">
    <subcellularLocation>
        <location evidence="1">Cytoplasm</location>
    </subcellularLocation>
</comment>
<comment type="similarity">
    <text evidence="1">Belongs to the elongation factor P family.</text>
</comment>